<organism>
    <name type="scientific">Staphylococcus aureus (strain MW2)</name>
    <dbReference type="NCBI Taxonomy" id="196620"/>
    <lineage>
        <taxon>Bacteria</taxon>
        <taxon>Bacillati</taxon>
        <taxon>Bacillota</taxon>
        <taxon>Bacilli</taxon>
        <taxon>Bacillales</taxon>
        <taxon>Staphylococcaceae</taxon>
        <taxon>Staphylococcus</taxon>
    </lineage>
</organism>
<comment type="function">
    <text evidence="1">Catalyzes the specific phosphorylation of arginine residues in proteins.</text>
</comment>
<comment type="catalytic activity">
    <reaction evidence="1">
        <text>L-arginyl-[protein] + ATP = N(omega)-phospho-L-arginyl-[protein] + ADP + H(+)</text>
        <dbReference type="Rhea" id="RHEA:43384"/>
        <dbReference type="Rhea" id="RHEA-COMP:10532"/>
        <dbReference type="Rhea" id="RHEA-COMP:10533"/>
        <dbReference type="ChEBI" id="CHEBI:15378"/>
        <dbReference type="ChEBI" id="CHEBI:29965"/>
        <dbReference type="ChEBI" id="CHEBI:30616"/>
        <dbReference type="ChEBI" id="CHEBI:83226"/>
        <dbReference type="ChEBI" id="CHEBI:456216"/>
        <dbReference type="EC" id="2.7.14.1"/>
    </reaction>
</comment>
<comment type="similarity">
    <text evidence="1">Belongs to the ATP:guanido phosphotransferase family.</text>
</comment>
<sequence>MTHNIHDNISQWMKSNEETPIVMSSRIRLARNLENHVHPLMYATENDGFRVINEVQDALPNFELMRLDQMDQQSKMKMVAKHLISPELIKQPAAAVLVNDDESLSVMINEEDHIRIQAMGTDTTLQALYNQASSIDDELDRSLDISYDEQLGYLTTCPTNIGTGMRASVMLHLPGLSIMKRMTRIAQTINRFGYTIRGIYGEGSQVYGHTYQVSNQLTLGKSELEIIETLTEVVNQIIHEEKQIRQKLDTYNQLETQDRVFRSLGILQNCRMITMEEASYRLSEVKLGIDLNYIELQNFKFNELMVAIQSPFLLDEEDDKSVKEKRADILREHIK</sequence>
<name>MCSB_STAAW</name>
<protein>
    <recommendedName>
        <fullName evidence="1">Protein-arginine kinase</fullName>
        <ecNumber evidence="1">2.7.14.1</ecNumber>
    </recommendedName>
</protein>
<keyword id="KW-0067">ATP-binding</keyword>
<keyword id="KW-0418">Kinase</keyword>
<keyword id="KW-0547">Nucleotide-binding</keyword>
<keyword id="KW-0808">Transferase</keyword>
<reference key="1">
    <citation type="journal article" date="2002" name="Lancet">
        <title>Genome and virulence determinants of high virulence community-acquired MRSA.</title>
        <authorList>
            <person name="Baba T."/>
            <person name="Takeuchi F."/>
            <person name="Kuroda M."/>
            <person name="Yuzawa H."/>
            <person name="Aoki K."/>
            <person name="Oguchi A."/>
            <person name="Nagai Y."/>
            <person name="Iwama N."/>
            <person name="Asano K."/>
            <person name="Naimi T."/>
            <person name="Kuroda H."/>
            <person name="Cui L."/>
            <person name="Yamamoto K."/>
            <person name="Hiramatsu K."/>
        </authorList>
    </citation>
    <scope>NUCLEOTIDE SEQUENCE [LARGE SCALE GENOMIC DNA]</scope>
    <source>
        <strain>MW2</strain>
    </source>
</reference>
<evidence type="ECO:0000255" key="1">
    <source>
        <dbReference type="HAMAP-Rule" id="MF_00602"/>
    </source>
</evidence>
<feature type="chain" id="PRO_0000212033" description="Protein-arginine kinase">
    <location>
        <begin position="1"/>
        <end position="335"/>
    </location>
</feature>
<feature type="domain" description="Phosphagen kinase C-terminal" evidence="1">
    <location>
        <begin position="21"/>
        <end position="244"/>
    </location>
</feature>
<feature type="binding site" evidence="1">
    <location>
        <begin position="24"/>
        <end position="28"/>
    </location>
    <ligand>
        <name>ATP</name>
        <dbReference type="ChEBI" id="CHEBI:30616"/>
    </ligand>
</feature>
<feature type="binding site" evidence="1">
    <location>
        <position position="82"/>
    </location>
    <ligand>
        <name>ATP</name>
        <dbReference type="ChEBI" id="CHEBI:30616"/>
    </ligand>
</feature>
<feature type="binding site" evidence="1">
    <location>
        <position position="115"/>
    </location>
    <ligand>
        <name>ATP</name>
        <dbReference type="ChEBI" id="CHEBI:30616"/>
    </ligand>
</feature>
<feature type="binding site" evidence="1">
    <location>
        <begin position="166"/>
        <end position="170"/>
    </location>
    <ligand>
        <name>ATP</name>
        <dbReference type="ChEBI" id="CHEBI:30616"/>
    </ligand>
</feature>
<feature type="binding site" evidence="1">
    <location>
        <begin position="197"/>
        <end position="202"/>
    </location>
    <ligand>
        <name>ATP</name>
        <dbReference type="ChEBI" id="CHEBI:30616"/>
    </ligand>
</feature>
<dbReference type="EC" id="2.7.14.1" evidence="1"/>
<dbReference type="EMBL" id="BA000033">
    <property type="protein sequence ID" value="BAB94344.1"/>
    <property type="molecule type" value="Genomic_DNA"/>
</dbReference>
<dbReference type="RefSeq" id="WP_000149503.1">
    <property type="nucleotide sequence ID" value="NC_003923.1"/>
</dbReference>
<dbReference type="SMR" id="Q8NXY9"/>
<dbReference type="KEGG" id="sam:MW0479"/>
<dbReference type="HOGENOM" id="CLU_066591_1_0_9"/>
<dbReference type="GO" id="GO:0005615">
    <property type="term" value="C:extracellular space"/>
    <property type="evidence" value="ECO:0007669"/>
    <property type="project" value="TreeGrafter"/>
</dbReference>
<dbReference type="GO" id="GO:0005524">
    <property type="term" value="F:ATP binding"/>
    <property type="evidence" value="ECO:0007669"/>
    <property type="project" value="UniProtKB-KW"/>
</dbReference>
<dbReference type="GO" id="GO:0004111">
    <property type="term" value="F:creatine kinase activity"/>
    <property type="evidence" value="ECO:0007669"/>
    <property type="project" value="InterPro"/>
</dbReference>
<dbReference type="GO" id="GO:0004672">
    <property type="term" value="F:protein kinase activity"/>
    <property type="evidence" value="ECO:0007669"/>
    <property type="project" value="UniProtKB-UniRule"/>
</dbReference>
<dbReference type="GO" id="GO:0046314">
    <property type="term" value="P:phosphocreatine biosynthetic process"/>
    <property type="evidence" value="ECO:0007669"/>
    <property type="project" value="InterPro"/>
</dbReference>
<dbReference type="CDD" id="cd07930">
    <property type="entry name" value="bacterial_phosphagen_kinase"/>
    <property type="match status" value="1"/>
</dbReference>
<dbReference type="FunFam" id="3.30.590.10:FF:000007">
    <property type="entry name" value="Protein-arginine kinase"/>
    <property type="match status" value="1"/>
</dbReference>
<dbReference type="Gene3D" id="3.30.590.10">
    <property type="entry name" value="Glutamine synthetase/guanido kinase, catalytic domain"/>
    <property type="match status" value="1"/>
</dbReference>
<dbReference type="HAMAP" id="MF_00602">
    <property type="entry name" value="Prot_Arg_kinase"/>
    <property type="match status" value="1"/>
</dbReference>
<dbReference type="InterPro" id="IPR023660">
    <property type="entry name" value="Arg_Kinase"/>
</dbReference>
<dbReference type="InterPro" id="IPR000749">
    <property type="entry name" value="ATP-guanido_PTrfase"/>
</dbReference>
<dbReference type="InterPro" id="IPR022415">
    <property type="entry name" value="ATP-guanido_PTrfase_AS"/>
</dbReference>
<dbReference type="InterPro" id="IPR022414">
    <property type="entry name" value="ATP-guanido_PTrfase_cat"/>
</dbReference>
<dbReference type="InterPro" id="IPR014746">
    <property type="entry name" value="Gln_synth/guanido_kin_cat_dom"/>
</dbReference>
<dbReference type="NCBIfam" id="NF002193">
    <property type="entry name" value="PRK01059.1-3"/>
    <property type="match status" value="1"/>
</dbReference>
<dbReference type="PANTHER" id="PTHR11547:SF38">
    <property type="entry name" value="ARGININE KINASE 1-RELATED"/>
    <property type="match status" value="1"/>
</dbReference>
<dbReference type="PANTHER" id="PTHR11547">
    <property type="entry name" value="ARGININE OR CREATINE KINASE"/>
    <property type="match status" value="1"/>
</dbReference>
<dbReference type="Pfam" id="PF00217">
    <property type="entry name" value="ATP-gua_Ptrans"/>
    <property type="match status" value="1"/>
</dbReference>
<dbReference type="SUPFAM" id="SSF55931">
    <property type="entry name" value="Glutamine synthetase/guanido kinase"/>
    <property type="match status" value="1"/>
</dbReference>
<dbReference type="PROSITE" id="PS00112">
    <property type="entry name" value="PHOSPHAGEN_KINASE"/>
    <property type="match status" value="1"/>
</dbReference>
<dbReference type="PROSITE" id="PS51510">
    <property type="entry name" value="PHOSPHAGEN_KINASE_C"/>
    <property type="match status" value="1"/>
</dbReference>
<accession>Q8NXY9</accession>
<gene>
    <name evidence="1" type="primary">mcsB</name>
    <name type="ordered locus">MW0479</name>
</gene>
<proteinExistence type="inferred from homology"/>